<comment type="cofactor">
    <cofactor evidence="1">
        <name>Zn(2+)</name>
        <dbReference type="ChEBI" id="CHEBI:29105"/>
    </cofactor>
    <text evidence="1">Binds 1 zinc ion per subunit.</text>
</comment>
<comment type="subcellular location">
    <subcellularLocation>
        <location evidence="1">Cell inner membrane</location>
        <topology evidence="1">Multi-pass membrane protein</topology>
    </subcellularLocation>
</comment>
<comment type="similarity">
    <text evidence="1">Belongs to the peptidase M48B family.</text>
</comment>
<name>HTPX_PSEA6</name>
<evidence type="ECO:0000255" key="1">
    <source>
        <dbReference type="HAMAP-Rule" id="MF_00188"/>
    </source>
</evidence>
<keyword id="KW-0997">Cell inner membrane</keyword>
<keyword id="KW-1003">Cell membrane</keyword>
<keyword id="KW-0378">Hydrolase</keyword>
<keyword id="KW-0472">Membrane</keyword>
<keyword id="KW-0479">Metal-binding</keyword>
<keyword id="KW-0482">Metalloprotease</keyword>
<keyword id="KW-0645">Protease</keyword>
<keyword id="KW-0812">Transmembrane</keyword>
<keyword id="KW-1133">Transmembrane helix</keyword>
<keyword id="KW-0862">Zinc</keyword>
<reference key="1">
    <citation type="submission" date="2006-06" db="EMBL/GenBank/DDBJ databases">
        <title>Complete sequence of Pseudoalteromonas atlantica T6c.</title>
        <authorList>
            <consortium name="US DOE Joint Genome Institute"/>
            <person name="Copeland A."/>
            <person name="Lucas S."/>
            <person name="Lapidus A."/>
            <person name="Barry K."/>
            <person name="Detter J.C."/>
            <person name="Glavina del Rio T."/>
            <person name="Hammon N."/>
            <person name="Israni S."/>
            <person name="Dalin E."/>
            <person name="Tice H."/>
            <person name="Pitluck S."/>
            <person name="Saunders E."/>
            <person name="Brettin T."/>
            <person name="Bruce D."/>
            <person name="Han C."/>
            <person name="Tapia R."/>
            <person name="Gilna P."/>
            <person name="Schmutz J."/>
            <person name="Larimer F."/>
            <person name="Land M."/>
            <person name="Hauser L."/>
            <person name="Kyrpides N."/>
            <person name="Kim E."/>
            <person name="Karls A.C."/>
            <person name="Bartlett D."/>
            <person name="Higgins B.P."/>
            <person name="Richardson P."/>
        </authorList>
    </citation>
    <scope>NUCLEOTIDE SEQUENCE [LARGE SCALE GENOMIC DNA]</scope>
    <source>
        <strain>T6c / ATCC BAA-1087</strain>
    </source>
</reference>
<dbReference type="EC" id="3.4.24.-" evidence="1"/>
<dbReference type="EMBL" id="CP000388">
    <property type="protein sequence ID" value="ABG38904.1"/>
    <property type="molecule type" value="Genomic_DNA"/>
</dbReference>
<dbReference type="RefSeq" id="WP_011573301.1">
    <property type="nucleotide sequence ID" value="NC_008228.1"/>
</dbReference>
<dbReference type="SMR" id="Q15YY4"/>
<dbReference type="STRING" id="342610.Patl_0373"/>
<dbReference type="MEROPS" id="M48.002"/>
<dbReference type="KEGG" id="pat:Patl_0373"/>
<dbReference type="eggNOG" id="COG0501">
    <property type="taxonomic scope" value="Bacteria"/>
</dbReference>
<dbReference type="HOGENOM" id="CLU_042266_1_0_6"/>
<dbReference type="OrthoDB" id="15218at2"/>
<dbReference type="Proteomes" id="UP000001981">
    <property type="component" value="Chromosome"/>
</dbReference>
<dbReference type="GO" id="GO:0005886">
    <property type="term" value="C:plasma membrane"/>
    <property type="evidence" value="ECO:0007669"/>
    <property type="project" value="UniProtKB-SubCell"/>
</dbReference>
<dbReference type="GO" id="GO:0004222">
    <property type="term" value="F:metalloendopeptidase activity"/>
    <property type="evidence" value="ECO:0007669"/>
    <property type="project" value="UniProtKB-UniRule"/>
</dbReference>
<dbReference type="GO" id="GO:0008270">
    <property type="term" value="F:zinc ion binding"/>
    <property type="evidence" value="ECO:0007669"/>
    <property type="project" value="UniProtKB-UniRule"/>
</dbReference>
<dbReference type="GO" id="GO:0006508">
    <property type="term" value="P:proteolysis"/>
    <property type="evidence" value="ECO:0007669"/>
    <property type="project" value="UniProtKB-KW"/>
</dbReference>
<dbReference type="CDD" id="cd07335">
    <property type="entry name" value="M48B_HtpX_like"/>
    <property type="match status" value="1"/>
</dbReference>
<dbReference type="Gene3D" id="3.30.2010.10">
    <property type="entry name" value="Metalloproteases ('zincins'), catalytic domain"/>
    <property type="match status" value="1"/>
</dbReference>
<dbReference type="HAMAP" id="MF_00188">
    <property type="entry name" value="Pept_M48_protease_HtpX"/>
    <property type="match status" value="1"/>
</dbReference>
<dbReference type="InterPro" id="IPR050083">
    <property type="entry name" value="HtpX_protease"/>
</dbReference>
<dbReference type="InterPro" id="IPR022919">
    <property type="entry name" value="Pept_M48_protease_HtpX"/>
</dbReference>
<dbReference type="InterPro" id="IPR001915">
    <property type="entry name" value="Peptidase_M48"/>
</dbReference>
<dbReference type="NCBIfam" id="NF003965">
    <property type="entry name" value="PRK05457.1"/>
    <property type="match status" value="1"/>
</dbReference>
<dbReference type="PANTHER" id="PTHR43221">
    <property type="entry name" value="PROTEASE HTPX"/>
    <property type="match status" value="1"/>
</dbReference>
<dbReference type="PANTHER" id="PTHR43221:SF1">
    <property type="entry name" value="PROTEASE HTPX"/>
    <property type="match status" value="1"/>
</dbReference>
<dbReference type="Pfam" id="PF01435">
    <property type="entry name" value="Peptidase_M48"/>
    <property type="match status" value="1"/>
</dbReference>
<accession>Q15YY4</accession>
<proteinExistence type="inferred from homology"/>
<feature type="chain" id="PRO_1000020912" description="Protease HtpX">
    <location>
        <begin position="1"/>
        <end position="290"/>
    </location>
</feature>
<feature type="transmembrane region" description="Helical" evidence="1">
    <location>
        <begin position="12"/>
        <end position="32"/>
    </location>
</feature>
<feature type="transmembrane region" description="Helical" evidence="1">
    <location>
        <begin position="42"/>
        <end position="62"/>
    </location>
</feature>
<feature type="transmembrane region" description="Helical" evidence="1">
    <location>
        <begin position="162"/>
        <end position="182"/>
    </location>
</feature>
<feature type="transmembrane region" description="Helical" evidence="1">
    <location>
        <begin position="197"/>
        <end position="217"/>
    </location>
</feature>
<feature type="active site" evidence="1">
    <location>
        <position position="148"/>
    </location>
</feature>
<feature type="binding site" evidence="1">
    <location>
        <position position="147"/>
    </location>
    <ligand>
        <name>Zn(2+)</name>
        <dbReference type="ChEBI" id="CHEBI:29105"/>
        <note>catalytic</note>
    </ligand>
</feature>
<feature type="binding site" evidence="1">
    <location>
        <position position="151"/>
    </location>
    <ligand>
        <name>Zn(2+)</name>
        <dbReference type="ChEBI" id="CHEBI:29105"/>
        <note>catalytic</note>
    </ligand>
</feature>
<feature type="binding site" evidence="1">
    <location>
        <position position="224"/>
    </location>
    <ligand>
        <name>Zn(2+)</name>
        <dbReference type="ChEBI" id="CHEBI:29105"/>
        <note>catalytic</note>
    </ligand>
</feature>
<protein>
    <recommendedName>
        <fullName evidence="1">Protease HtpX</fullName>
        <ecNumber evidence="1">3.4.24.-</ecNumber>
    </recommendedName>
    <alternativeName>
        <fullName evidence="1">Heat shock protein HtpX</fullName>
    </alternativeName>
</protein>
<gene>
    <name evidence="1" type="primary">htpX</name>
    <name type="ordered locus">Patl_0373</name>
</gene>
<organism>
    <name type="scientific">Pseudoalteromonas atlantica (strain T6c / ATCC BAA-1087)</name>
    <dbReference type="NCBI Taxonomy" id="3042615"/>
    <lineage>
        <taxon>Bacteria</taxon>
        <taxon>Pseudomonadati</taxon>
        <taxon>Pseudomonadota</taxon>
        <taxon>Gammaproteobacteria</taxon>
        <taxon>Alteromonadales</taxon>
        <taxon>Alteromonadaceae</taxon>
        <taxon>Paraglaciecola</taxon>
    </lineage>
</organism>
<sequence>MFRILMFLATNIAVMVLISLVFSLFGFQGLLAQNGVDLDLQALLVYSAVIGFSGSIISLLISKFMAKRSMNVHVLEHPENDTERWLLRTVERQAEQANIGMPEVGIFVHASPNAFATGWNKNNALVAVSTGLLENMTQSEVEAVLAHEISHVANGDMVTMTLIQGVLNTFVVFLSRVIGHVVDRVVFKVERGHGPAFWIVSIISQVILGILASMIVMWFSRYREFRADAGGASIAGRNNMIAALKRLKQNQDAPPMPEEMAAFAISAGKVQKLFSSHPPLDKRIEALQKG</sequence>